<organism>
    <name type="scientific">Homo sapiens</name>
    <name type="common">Human</name>
    <dbReference type="NCBI Taxonomy" id="9606"/>
    <lineage>
        <taxon>Eukaryota</taxon>
        <taxon>Metazoa</taxon>
        <taxon>Chordata</taxon>
        <taxon>Craniata</taxon>
        <taxon>Vertebrata</taxon>
        <taxon>Euteleostomi</taxon>
        <taxon>Mammalia</taxon>
        <taxon>Eutheria</taxon>
        <taxon>Euarchontoglires</taxon>
        <taxon>Primates</taxon>
        <taxon>Haplorrhini</taxon>
        <taxon>Catarrhini</taxon>
        <taxon>Hominidae</taxon>
        <taxon>Homo</taxon>
    </lineage>
</organism>
<accession>Q96HJ9</accession>
<accession>B7Z4Q3</accession>
<accession>Q75M90</accession>
<accession>Q9P0B3</accession>
<reference key="1">
    <citation type="journal article" date="2004" name="Nat. Genet.">
        <title>Complete sequencing and characterization of 21,243 full-length human cDNAs.</title>
        <authorList>
            <person name="Ota T."/>
            <person name="Suzuki Y."/>
            <person name="Nishikawa T."/>
            <person name="Otsuki T."/>
            <person name="Sugiyama T."/>
            <person name="Irie R."/>
            <person name="Wakamatsu A."/>
            <person name="Hayashi K."/>
            <person name="Sato H."/>
            <person name="Nagai K."/>
            <person name="Kimura K."/>
            <person name="Makita H."/>
            <person name="Sekine M."/>
            <person name="Obayashi M."/>
            <person name="Nishi T."/>
            <person name="Shibahara T."/>
            <person name="Tanaka T."/>
            <person name="Ishii S."/>
            <person name="Yamamoto J."/>
            <person name="Saito K."/>
            <person name="Kawai Y."/>
            <person name="Isono Y."/>
            <person name="Nakamura Y."/>
            <person name="Nagahari K."/>
            <person name="Murakami K."/>
            <person name="Yasuda T."/>
            <person name="Iwayanagi T."/>
            <person name="Wagatsuma M."/>
            <person name="Shiratori A."/>
            <person name="Sudo H."/>
            <person name="Hosoiri T."/>
            <person name="Kaku Y."/>
            <person name="Kodaira H."/>
            <person name="Kondo H."/>
            <person name="Sugawara M."/>
            <person name="Takahashi M."/>
            <person name="Kanda K."/>
            <person name="Yokoi T."/>
            <person name="Furuya T."/>
            <person name="Kikkawa E."/>
            <person name="Omura Y."/>
            <person name="Abe K."/>
            <person name="Kamihara K."/>
            <person name="Katsuta N."/>
            <person name="Sato K."/>
            <person name="Tanikawa M."/>
            <person name="Yamazaki M."/>
            <person name="Ninomiya K."/>
            <person name="Ishibashi T."/>
            <person name="Yamashita H."/>
            <person name="Murakawa K."/>
            <person name="Fujimori K."/>
            <person name="Tanai H."/>
            <person name="Kimata M."/>
            <person name="Watanabe M."/>
            <person name="Hiraoka S."/>
            <person name="Chiba Y."/>
            <person name="Ishida S."/>
            <person name="Ono Y."/>
            <person name="Takiguchi S."/>
            <person name="Watanabe S."/>
            <person name="Yosida M."/>
            <person name="Hotuta T."/>
            <person name="Kusano J."/>
            <person name="Kanehori K."/>
            <person name="Takahashi-Fujii A."/>
            <person name="Hara H."/>
            <person name="Tanase T.-O."/>
            <person name="Nomura Y."/>
            <person name="Togiya S."/>
            <person name="Komai F."/>
            <person name="Hara R."/>
            <person name="Takeuchi K."/>
            <person name="Arita M."/>
            <person name="Imose N."/>
            <person name="Musashino K."/>
            <person name="Yuuki H."/>
            <person name="Oshima A."/>
            <person name="Sasaki N."/>
            <person name="Aotsuka S."/>
            <person name="Yoshikawa Y."/>
            <person name="Matsunawa H."/>
            <person name="Ichihara T."/>
            <person name="Shiohata N."/>
            <person name="Sano S."/>
            <person name="Moriya S."/>
            <person name="Momiyama H."/>
            <person name="Satoh N."/>
            <person name="Takami S."/>
            <person name="Terashima Y."/>
            <person name="Suzuki O."/>
            <person name="Nakagawa S."/>
            <person name="Senoh A."/>
            <person name="Mizoguchi H."/>
            <person name="Goto Y."/>
            <person name="Shimizu F."/>
            <person name="Wakebe H."/>
            <person name="Hishigaki H."/>
            <person name="Watanabe T."/>
            <person name="Sugiyama A."/>
            <person name="Takemoto M."/>
            <person name="Kawakami B."/>
            <person name="Yamazaki M."/>
            <person name="Watanabe K."/>
            <person name="Kumagai A."/>
            <person name="Itakura S."/>
            <person name="Fukuzumi Y."/>
            <person name="Fujimori Y."/>
            <person name="Komiyama M."/>
            <person name="Tashiro H."/>
            <person name="Tanigami A."/>
            <person name="Fujiwara T."/>
            <person name="Ono T."/>
            <person name="Yamada K."/>
            <person name="Fujii Y."/>
            <person name="Ozaki K."/>
            <person name="Hirao M."/>
            <person name="Ohmori Y."/>
            <person name="Kawabata A."/>
            <person name="Hikiji T."/>
            <person name="Kobatake N."/>
            <person name="Inagaki H."/>
            <person name="Ikema Y."/>
            <person name="Okamoto S."/>
            <person name="Okitani R."/>
            <person name="Kawakami T."/>
            <person name="Noguchi S."/>
            <person name="Itoh T."/>
            <person name="Shigeta K."/>
            <person name="Senba T."/>
            <person name="Matsumura K."/>
            <person name="Nakajima Y."/>
            <person name="Mizuno T."/>
            <person name="Morinaga M."/>
            <person name="Sasaki M."/>
            <person name="Togashi T."/>
            <person name="Oyama M."/>
            <person name="Hata H."/>
            <person name="Watanabe M."/>
            <person name="Komatsu T."/>
            <person name="Mizushima-Sugano J."/>
            <person name="Satoh T."/>
            <person name="Shirai Y."/>
            <person name="Takahashi Y."/>
            <person name="Nakagawa K."/>
            <person name="Okumura K."/>
            <person name="Nagase T."/>
            <person name="Nomura N."/>
            <person name="Kikuchi H."/>
            <person name="Masuho Y."/>
            <person name="Yamashita R."/>
            <person name="Nakai K."/>
            <person name="Yada T."/>
            <person name="Nakamura Y."/>
            <person name="Ohara O."/>
            <person name="Isogai T."/>
            <person name="Sugano S."/>
        </authorList>
    </citation>
    <scope>NUCLEOTIDE SEQUENCE [LARGE SCALE MRNA] (ISOFORM 2)</scope>
    <source>
        <tissue>Brain</tissue>
    </source>
</reference>
<reference key="2">
    <citation type="submission" date="1999-05" db="EMBL/GenBank/DDBJ databases">
        <title>Human partial CDS from CD34+ stem cells.</title>
        <authorList>
            <person name="Ye M."/>
            <person name="Zhang Q.-H."/>
            <person name="Zhou J."/>
            <person name="Shen Y."/>
            <person name="Wu X.-Y."/>
            <person name="Guan Z.Q."/>
            <person name="Wang L."/>
            <person name="Fan H.-Y."/>
            <person name="Mao Y.-F."/>
            <person name="Dai M."/>
            <person name="Huang Q.-H."/>
            <person name="Chen S.-J."/>
            <person name="Chen Z."/>
        </authorList>
    </citation>
    <scope>NUCLEOTIDE SEQUENCE [LARGE SCALE MRNA] (ISOFORM 1)</scope>
    <source>
        <tissue>Umbilical cord blood</tissue>
    </source>
</reference>
<reference key="3">
    <citation type="journal article" date="2003" name="Nature">
        <title>The DNA sequence of human chromosome 7.</title>
        <authorList>
            <person name="Hillier L.W."/>
            <person name="Fulton R.S."/>
            <person name="Fulton L.A."/>
            <person name="Graves T.A."/>
            <person name="Pepin K.H."/>
            <person name="Wagner-McPherson C."/>
            <person name="Layman D."/>
            <person name="Maas J."/>
            <person name="Jaeger S."/>
            <person name="Walker R."/>
            <person name="Wylie K."/>
            <person name="Sekhon M."/>
            <person name="Becker M.C."/>
            <person name="O'Laughlin M.D."/>
            <person name="Schaller M.E."/>
            <person name="Fewell G.A."/>
            <person name="Delehaunty K.D."/>
            <person name="Miner T.L."/>
            <person name="Nash W.E."/>
            <person name="Cordes M."/>
            <person name="Du H."/>
            <person name="Sun H."/>
            <person name="Edwards J."/>
            <person name="Bradshaw-Cordum H."/>
            <person name="Ali J."/>
            <person name="Andrews S."/>
            <person name="Isak A."/>
            <person name="Vanbrunt A."/>
            <person name="Nguyen C."/>
            <person name="Du F."/>
            <person name="Lamar B."/>
            <person name="Courtney L."/>
            <person name="Kalicki J."/>
            <person name="Ozersky P."/>
            <person name="Bielicki L."/>
            <person name="Scott K."/>
            <person name="Holmes A."/>
            <person name="Harkins R."/>
            <person name="Harris A."/>
            <person name="Strong C.M."/>
            <person name="Hou S."/>
            <person name="Tomlinson C."/>
            <person name="Dauphin-Kohlberg S."/>
            <person name="Kozlowicz-Reilly A."/>
            <person name="Leonard S."/>
            <person name="Rohlfing T."/>
            <person name="Rock S.M."/>
            <person name="Tin-Wollam A.-M."/>
            <person name="Abbott A."/>
            <person name="Minx P."/>
            <person name="Maupin R."/>
            <person name="Strowmatt C."/>
            <person name="Latreille P."/>
            <person name="Miller N."/>
            <person name="Johnson D."/>
            <person name="Murray J."/>
            <person name="Woessner J.P."/>
            <person name="Wendl M.C."/>
            <person name="Yang S.-P."/>
            <person name="Schultz B.R."/>
            <person name="Wallis J.W."/>
            <person name="Spieth J."/>
            <person name="Bieri T.A."/>
            <person name="Nelson J.O."/>
            <person name="Berkowicz N."/>
            <person name="Wohldmann P.E."/>
            <person name="Cook L.L."/>
            <person name="Hickenbotham M.T."/>
            <person name="Eldred J."/>
            <person name="Williams D."/>
            <person name="Bedell J.A."/>
            <person name="Mardis E.R."/>
            <person name="Clifton S.W."/>
            <person name="Chissoe S.L."/>
            <person name="Marra M.A."/>
            <person name="Raymond C."/>
            <person name="Haugen E."/>
            <person name="Gillett W."/>
            <person name="Zhou Y."/>
            <person name="James R."/>
            <person name="Phelps K."/>
            <person name="Iadanoto S."/>
            <person name="Bubb K."/>
            <person name="Simms E."/>
            <person name="Levy R."/>
            <person name="Clendenning J."/>
            <person name="Kaul R."/>
            <person name="Kent W.J."/>
            <person name="Furey T.S."/>
            <person name="Baertsch R.A."/>
            <person name="Brent M.R."/>
            <person name="Keibler E."/>
            <person name="Flicek P."/>
            <person name="Bork P."/>
            <person name="Suyama M."/>
            <person name="Bailey J.A."/>
            <person name="Portnoy M.E."/>
            <person name="Torrents D."/>
            <person name="Chinwalla A.T."/>
            <person name="Gish W.R."/>
            <person name="Eddy S.R."/>
            <person name="McPherson J.D."/>
            <person name="Olson M.V."/>
            <person name="Eichler E.E."/>
            <person name="Green E.D."/>
            <person name="Waterston R.H."/>
            <person name="Wilson R.K."/>
        </authorList>
    </citation>
    <scope>NUCLEOTIDE SEQUENCE [LARGE SCALE GENOMIC DNA]</scope>
</reference>
<reference key="4">
    <citation type="submission" date="2005-07" db="EMBL/GenBank/DDBJ databases">
        <authorList>
            <person name="Mural R.J."/>
            <person name="Istrail S."/>
            <person name="Sutton G.G."/>
            <person name="Florea L."/>
            <person name="Halpern A.L."/>
            <person name="Mobarry C.M."/>
            <person name="Lippert R."/>
            <person name="Walenz B."/>
            <person name="Shatkay H."/>
            <person name="Dew I."/>
            <person name="Miller J.R."/>
            <person name="Flanigan M.J."/>
            <person name="Edwards N.J."/>
            <person name="Bolanos R."/>
            <person name="Fasulo D."/>
            <person name="Halldorsson B.V."/>
            <person name="Hannenhalli S."/>
            <person name="Turner R."/>
            <person name="Yooseph S."/>
            <person name="Lu F."/>
            <person name="Nusskern D.R."/>
            <person name="Shue B.C."/>
            <person name="Zheng X.H."/>
            <person name="Zhong F."/>
            <person name="Delcher A.L."/>
            <person name="Huson D.H."/>
            <person name="Kravitz S.A."/>
            <person name="Mouchard L."/>
            <person name="Reinert K."/>
            <person name="Remington K.A."/>
            <person name="Clark A.G."/>
            <person name="Waterman M.S."/>
            <person name="Eichler E.E."/>
            <person name="Adams M.D."/>
            <person name="Hunkapiller M.W."/>
            <person name="Myers E.W."/>
            <person name="Venter J.C."/>
        </authorList>
    </citation>
    <scope>NUCLEOTIDE SEQUENCE [LARGE SCALE GENOMIC DNA]</scope>
</reference>
<reference key="5">
    <citation type="journal article" date="2004" name="Genome Res.">
        <title>The status, quality, and expansion of the NIH full-length cDNA project: the Mammalian Gene Collection (MGC).</title>
        <authorList>
            <consortium name="The MGC Project Team"/>
        </authorList>
    </citation>
    <scope>NUCLEOTIDE SEQUENCE [LARGE SCALE MRNA]</scope>
    <scope>VARIANT ALA-8</scope>
    <source>
        <tissue>Brain</tissue>
    </source>
</reference>
<reference key="6">
    <citation type="journal article" date="2011" name="BMC Syst. Biol.">
        <title>Initial characterization of the human central proteome.</title>
        <authorList>
            <person name="Burkard T.R."/>
            <person name="Planyavsky M."/>
            <person name="Kaupe I."/>
            <person name="Breitwieser F.P."/>
            <person name="Buerckstuemmer T."/>
            <person name="Bennett K.L."/>
            <person name="Superti-Furga G."/>
            <person name="Colinge J."/>
        </authorList>
    </citation>
    <scope>IDENTIFICATION BY MASS SPECTROMETRY [LARGE SCALE ANALYSIS]</scope>
</reference>
<reference key="7">
    <citation type="journal article" date="2015" name="Proteomics">
        <title>N-terminome analysis of the human mitochondrial proteome.</title>
        <authorList>
            <person name="Vaca Jacome A.S."/>
            <person name="Rabilloud T."/>
            <person name="Schaeffer-Reiss C."/>
            <person name="Rompais M."/>
            <person name="Ayoub D."/>
            <person name="Lane L."/>
            <person name="Bairoch A."/>
            <person name="Van Dorsselaer A."/>
            <person name="Carapito C."/>
        </authorList>
    </citation>
    <scope>IDENTIFICATION BY MASS SPECTROMETRY [LARGE SCALE ANALYSIS]</scope>
</reference>
<reference key="8">
    <citation type="journal article" date="2017" name="PLoS Comput. Biol.">
        <title>CLIC, a tool for expanding biological pathways based on co-expression across thousands of datasets.</title>
        <authorList>
            <person name="Li Y."/>
            <person name="Jourdain A.A."/>
            <person name="Calvo S.E."/>
            <person name="Liu J.S."/>
            <person name="Mootha V.K."/>
        </authorList>
    </citation>
    <scope>FUNCTION</scope>
    <scope>SUBCELLULAR LOCATION</scope>
    <scope>INTERACTION WITH ATPAF2</scope>
</reference>
<dbReference type="EMBL" id="AK297642">
    <property type="protein sequence ID" value="BAH12639.1"/>
    <property type="molecule type" value="mRNA"/>
</dbReference>
<dbReference type="EMBL" id="AF161386">
    <property type="protein sequence ID" value="AAF28946.1"/>
    <property type="status" value="ALT_SEQ"/>
    <property type="molecule type" value="mRNA"/>
</dbReference>
<dbReference type="EMBL" id="AC083880">
    <property type="protein sequence ID" value="AAS07478.1"/>
    <property type="molecule type" value="Genomic_DNA"/>
</dbReference>
<dbReference type="EMBL" id="AC083883">
    <property type="status" value="NOT_ANNOTATED_CDS"/>
    <property type="molecule type" value="Genomic_DNA"/>
</dbReference>
<dbReference type="EMBL" id="CH471070">
    <property type="protein sequence ID" value="EAW83915.1"/>
    <property type="molecule type" value="Genomic_DNA"/>
</dbReference>
<dbReference type="EMBL" id="BC008467">
    <property type="protein sequence ID" value="AAH08467.1"/>
    <property type="molecule type" value="mRNA"/>
</dbReference>
<dbReference type="CCDS" id="CCDS5853.1">
    <molecule id="Q96HJ9-1"/>
</dbReference>
<dbReference type="RefSeq" id="NP_001231513.1">
    <molecule id="Q96HJ9-2"/>
    <property type="nucleotide sequence ID" value="NM_001244584.2"/>
</dbReference>
<dbReference type="RefSeq" id="NP_932068.2">
    <molecule id="Q96HJ9-1"/>
    <property type="nucleotide sequence ID" value="NM_197964.5"/>
</dbReference>
<dbReference type="SMR" id="Q96HJ9"/>
<dbReference type="BioGRID" id="127556">
    <property type="interactions" value="57"/>
</dbReference>
<dbReference type="BioGRID" id="3190610">
    <property type="interactions" value="19"/>
</dbReference>
<dbReference type="FunCoup" id="Q96HJ9">
    <property type="interactions" value="930"/>
</dbReference>
<dbReference type="IntAct" id="Q96HJ9">
    <property type="interactions" value="86"/>
</dbReference>
<dbReference type="STRING" id="9606.ENSP00000297534"/>
<dbReference type="GlyGen" id="Q96HJ9">
    <property type="glycosylation" value="1 site, 1 O-linked glycan (1 site)"/>
</dbReference>
<dbReference type="iPTMnet" id="Q96HJ9"/>
<dbReference type="PhosphoSitePlus" id="Q96HJ9"/>
<dbReference type="BioMuta" id="FMC1"/>
<dbReference type="DMDM" id="182627648"/>
<dbReference type="jPOST" id="Q96HJ9"/>
<dbReference type="MassIVE" id="Q96HJ9"/>
<dbReference type="PaxDb" id="9606-ENSP00000297534"/>
<dbReference type="PeptideAtlas" id="Q96HJ9"/>
<dbReference type="ProteomicsDB" id="6622"/>
<dbReference type="ProteomicsDB" id="76758">
    <molecule id="Q96HJ9-1"/>
</dbReference>
<dbReference type="Pumba" id="Q96HJ9"/>
<dbReference type="Antibodypedia" id="71139">
    <property type="antibodies" value="8 antibodies from 4 providers"/>
</dbReference>
<dbReference type="DNASU" id="154791"/>
<dbReference type="DNASU" id="51631"/>
<dbReference type="Ensembl" id="ENST00000297534.7">
    <molecule id="Q96HJ9-1"/>
    <property type="protein sequence ID" value="ENSP00000297534.6"/>
    <property type="gene ID" value="ENSG00000164898.13"/>
</dbReference>
<dbReference type="GeneID" id="100996928"/>
<dbReference type="GeneID" id="154791"/>
<dbReference type="KEGG" id="hsa:100996928"/>
<dbReference type="KEGG" id="hsa:154791"/>
<dbReference type="MANE-Select" id="ENST00000297534.7">
    <property type="protein sequence ID" value="ENSP00000297534.6"/>
    <property type="RefSeq nucleotide sequence ID" value="NM_197964.5"/>
    <property type="RefSeq protein sequence ID" value="NP_932068.2"/>
</dbReference>
<dbReference type="UCSC" id="uc003vuw.5">
    <molecule id="Q96HJ9-1"/>
    <property type="organism name" value="human"/>
</dbReference>
<dbReference type="AGR" id="HGNC:26946"/>
<dbReference type="AGR" id="HGNC:44671"/>
<dbReference type="CTD" id="100996928"/>
<dbReference type="CTD" id="154791"/>
<dbReference type="GeneCards" id="FMC1"/>
<dbReference type="HGNC" id="HGNC:26946">
    <property type="gene designation" value="FMC1"/>
</dbReference>
<dbReference type="HPA" id="ENSG00000164898">
    <property type="expression patterns" value="Low tissue specificity"/>
</dbReference>
<dbReference type="MIM" id="620766">
    <property type="type" value="gene"/>
</dbReference>
<dbReference type="neXtProt" id="NX_Q96HJ9"/>
<dbReference type="OpenTargets" id="ENSG00000164898"/>
<dbReference type="OpenTargets" id="ENSG00000269955"/>
<dbReference type="PharmGKB" id="PA164717374"/>
<dbReference type="VEuPathDB" id="HostDB:ENSG00000164898"/>
<dbReference type="eggNOG" id="ENOG502S1MM">
    <property type="taxonomic scope" value="Eukaryota"/>
</dbReference>
<dbReference type="GeneTree" id="ENSGT00390000012258"/>
<dbReference type="HOGENOM" id="CLU_159000_0_0_1"/>
<dbReference type="InParanoid" id="Q96HJ9"/>
<dbReference type="OMA" id="HHASLTY"/>
<dbReference type="OrthoDB" id="551431at2759"/>
<dbReference type="PAN-GO" id="Q96HJ9">
    <property type="GO annotations" value="1 GO annotation based on evolutionary models"/>
</dbReference>
<dbReference type="PhylomeDB" id="Q96HJ9"/>
<dbReference type="TreeFam" id="TF321497"/>
<dbReference type="PathwayCommons" id="Q96HJ9"/>
<dbReference type="SignaLink" id="Q96HJ9"/>
<dbReference type="BioGRID-ORCS" id="100996928">
    <property type="hits" value="488 hits in 1065 CRISPR screens"/>
</dbReference>
<dbReference type="BioGRID-ORCS" id="154791">
    <property type="hits" value="10 hits in 1084 CRISPR screens"/>
</dbReference>
<dbReference type="CD-CODE" id="DEE660B4">
    <property type="entry name" value="Stress granule"/>
</dbReference>
<dbReference type="Pharos" id="Q96HJ9">
    <property type="development level" value="Tbio"/>
</dbReference>
<dbReference type="PRO" id="PR:Q96HJ9"/>
<dbReference type="Proteomes" id="UP000005640">
    <property type="component" value="Chromosome 7"/>
</dbReference>
<dbReference type="RNAct" id="Q96HJ9">
    <property type="molecule type" value="protein"/>
</dbReference>
<dbReference type="Bgee" id="ENSG00000164898">
    <property type="expression patterns" value="Expressed in left testis and 96 other cell types or tissues"/>
</dbReference>
<dbReference type="GO" id="GO:0005739">
    <property type="term" value="C:mitochondrion"/>
    <property type="evidence" value="ECO:0000314"/>
    <property type="project" value="UniProtKB"/>
</dbReference>
<dbReference type="GO" id="GO:0008637">
    <property type="term" value="P:apoptotic mitochondrial changes"/>
    <property type="evidence" value="ECO:0007669"/>
    <property type="project" value="Ensembl"/>
</dbReference>
<dbReference type="GO" id="GO:0071542">
    <property type="term" value="P:dopaminergic neuron differentiation"/>
    <property type="evidence" value="ECO:0007669"/>
    <property type="project" value="Ensembl"/>
</dbReference>
<dbReference type="GO" id="GO:0033615">
    <property type="term" value="P:mitochondrial proton-transporting ATP synthase complex assembly"/>
    <property type="evidence" value="ECO:0000315"/>
    <property type="project" value="UniProtKB"/>
</dbReference>
<dbReference type="GO" id="GO:0061744">
    <property type="term" value="P:motor behavior"/>
    <property type="evidence" value="ECO:0007669"/>
    <property type="project" value="Ensembl"/>
</dbReference>
<dbReference type="GO" id="GO:0050995">
    <property type="term" value="P:negative regulation of lipid catabolic process"/>
    <property type="evidence" value="ECO:0007669"/>
    <property type="project" value="Ensembl"/>
</dbReference>
<dbReference type="GO" id="GO:0061469">
    <property type="term" value="P:regulation of type B pancreatic cell proliferation"/>
    <property type="evidence" value="ECO:0007669"/>
    <property type="project" value="Ensembl"/>
</dbReference>
<dbReference type="GO" id="GO:0009636">
    <property type="term" value="P:response to toxic substance"/>
    <property type="evidence" value="ECO:0007669"/>
    <property type="project" value="Ensembl"/>
</dbReference>
<dbReference type="CDD" id="cd20271">
    <property type="entry name" value="Complex1_LYR_FMC1"/>
    <property type="match status" value="1"/>
</dbReference>
<dbReference type="InterPro" id="IPR037667">
    <property type="entry name" value="FMC1_homologue"/>
</dbReference>
<dbReference type="PANTHER" id="PTHR31716">
    <property type="entry name" value="PROTEIN FMC1 HOMOLOG"/>
    <property type="match status" value="1"/>
</dbReference>
<dbReference type="PANTHER" id="PTHR31716:SF1">
    <property type="entry name" value="PROTEIN FMC1 HOMOLOG"/>
    <property type="match status" value="1"/>
</dbReference>
<dbReference type="Pfam" id="PF13233">
    <property type="entry name" value="Complex1_LYR_2"/>
    <property type="match status" value="1"/>
</dbReference>
<evidence type="ECO:0000256" key="1">
    <source>
        <dbReference type="SAM" id="MobiDB-lite"/>
    </source>
</evidence>
<evidence type="ECO:0000269" key="2">
    <source>
    </source>
</evidence>
<evidence type="ECO:0000269" key="3">
    <source>
    </source>
</evidence>
<evidence type="ECO:0000303" key="4">
    <source>
    </source>
</evidence>
<evidence type="ECO:0000305" key="5"/>
<evidence type="ECO:0000312" key="6">
    <source>
        <dbReference type="HGNC" id="HGNC:26946"/>
    </source>
</evidence>
<gene>
    <name evidence="6" type="primary">FMC1</name>
    <name type="synonym">C7orf55</name>
    <name type="ORF">HSPC268</name>
</gene>
<protein>
    <recommendedName>
        <fullName>Protein FMC1 homolog</fullName>
    </recommendedName>
    <alternativeName>
        <fullName evidence="6">ATP synthase assembly factor FMC1, mitochondrial</fullName>
    </alternativeName>
    <alternativeName>
        <fullName evidence="6">Formation of mitochondrial complex V assembly factor 1 homolog</fullName>
    </alternativeName>
</protein>
<feature type="chain" id="PRO_0000328780" description="Protein FMC1 homolog">
    <location>
        <begin position="1"/>
        <end position="113"/>
    </location>
</feature>
<feature type="region of interest" description="Disordered" evidence="1">
    <location>
        <begin position="94"/>
        <end position="113"/>
    </location>
</feature>
<feature type="splice variant" id="VSP_047244" description="In isoform 2." evidence="4">
    <original>ERSVEESAGLVGLKLPHQPGGKGWEP</original>
    <variation>DTTRQRIKFSDDRVCKSHLLNCCPHDVLSGTRMDLGECLKVHDLALRADYEIASKEQDFFFELDAMDHLQSFIADCDRRTEVAKKRLAETQEEISAEVAAKAERVHELNEEIGKLLAKVEQLGAEGNVEESQKVMDEVEKARAKKREAEEVYRNSMPASSFQQQKLRVCEVCSAYLGLHDNDRRLADHFGGKLHLGFIEIREKLEELKRVVAEKQEKRNQERLKRREEREREEREKLRRSRSHSKNPKRSRSREHRRHRSRSMSRERKRRTRSKSREKRHRHRSRSSSRSRSRSHQRSRHSSRDRSRERSKRRSSKERFRDQDLASCDRDRSSRDRSPRDRDRKDKKRSYESANGRSEDRRSSEEREAGEI</variation>
    <location>
        <begin position="88"/>
        <end position="113"/>
    </location>
</feature>
<feature type="sequence variant" id="VAR_042520" description="In dbSNP:rs10265." evidence="2">
    <original>S</original>
    <variation>A</variation>
    <location>
        <position position="8"/>
    </location>
</feature>
<proteinExistence type="evidence at protein level"/>
<comment type="function">
    <text evidence="3">Plays a role in the assembly/stability of the mitochondrial membrane ATP synthase (F(1)F(0) ATP synthase or Complex V) (PubMed:28719601).</text>
</comment>
<comment type="subunit">
    <text evidence="3">Interacts with ATPAF2 (PubMed:28719601).</text>
</comment>
<comment type="subcellular location">
    <subcellularLocation>
        <location evidence="3">Mitochondrion</location>
    </subcellularLocation>
</comment>
<comment type="alternative products">
    <event type="alternative splicing"/>
    <isoform>
        <id>Q96HJ9-1</id>
        <name>1</name>
        <sequence type="displayed"/>
    </isoform>
    <isoform>
        <id>Q96HJ9-2</id>
        <name>2</name>
        <sequence type="described" ref="VSP_047244"/>
    </isoform>
</comment>
<comment type="similarity">
    <text evidence="5">Belongs to the FMC1 family.</text>
</comment>
<comment type="sequence caution" evidence="5">
    <conflict type="erroneous initiation">
        <sequence resource="EMBL-CDS" id="AAF28946"/>
    </conflict>
    <text>Extended N-terminus.</text>
</comment>
<comment type="sequence caution" evidence="5">
    <conflict type="frameshift">
        <sequence resource="EMBL-CDS" id="AAF28946"/>
    </conflict>
</comment>
<name>FMC1_HUMAN</name>
<sequence length="113" mass="12749">MAALGSPSHTFRGLLRELRYLSAATGRPYRDTAAYRYLVKAFRAHRVTSEKLCRAQHELHFQAATYLCLLRSIRKHVALHQEFHGKGERSVEESAGLVGLKLPHQPGGKGWEP</sequence>
<keyword id="KW-0025">Alternative splicing</keyword>
<keyword id="KW-0496">Mitochondrion</keyword>
<keyword id="KW-1267">Proteomics identification</keyword>
<keyword id="KW-1185">Reference proteome</keyword>